<dbReference type="EMBL" id="CP001233">
    <property type="protein sequence ID" value="ACP04854.1"/>
    <property type="molecule type" value="Genomic_DNA"/>
</dbReference>
<dbReference type="RefSeq" id="WP_000829823.1">
    <property type="nucleotide sequence ID" value="NC_012578.1"/>
</dbReference>
<dbReference type="SMR" id="C3LS61"/>
<dbReference type="GeneID" id="94014649"/>
<dbReference type="KEGG" id="vcm:VCM66_0529"/>
<dbReference type="HOGENOM" id="CLU_046483_2_1_6"/>
<dbReference type="Proteomes" id="UP000001217">
    <property type="component" value="Chromosome I"/>
</dbReference>
<dbReference type="GO" id="GO:0022627">
    <property type="term" value="C:cytosolic small ribosomal subunit"/>
    <property type="evidence" value="ECO:0007669"/>
    <property type="project" value="TreeGrafter"/>
</dbReference>
<dbReference type="GO" id="GO:0003723">
    <property type="term" value="F:RNA binding"/>
    <property type="evidence" value="ECO:0007669"/>
    <property type="project" value="TreeGrafter"/>
</dbReference>
<dbReference type="GO" id="GO:0003735">
    <property type="term" value="F:structural constituent of ribosome"/>
    <property type="evidence" value="ECO:0007669"/>
    <property type="project" value="InterPro"/>
</dbReference>
<dbReference type="GO" id="GO:0006412">
    <property type="term" value="P:translation"/>
    <property type="evidence" value="ECO:0007669"/>
    <property type="project" value="UniProtKB-UniRule"/>
</dbReference>
<dbReference type="FunFam" id="3.30.230.10:FF:000001">
    <property type="entry name" value="30S ribosomal protein S9"/>
    <property type="match status" value="1"/>
</dbReference>
<dbReference type="Gene3D" id="3.30.230.10">
    <property type="match status" value="1"/>
</dbReference>
<dbReference type="HAMAP" id="MF_00532_B">
    <property type="entry name" value="Ribosomal_uS9_B"/>
    <property type="match status" value="1"/>
</dbReference>
<dbReference type="InterPro" id="IPR020568">
    <property type="entry name" value="Ribosomal_Su5_D2-typ_SF"/>
</dbReference>
<dbReference type="InterPro" id="IPR000754">
    <property type="entry name" value="Ribosomal_uS9"/>
</dbReference>
<dbReference type="InterPro" id="IPR023035">
    <property type="entry name" value="Ribosomal_uS9_bac/plastid"/>
</dbReference>
<dbReference type="InterPro" id="IPR020574">
    <property type="entry name" value="Ribosomal_uS9_CS"/>
</dbReference>
<dbReference type="InterPro" id="IPR014721">
    <property type="entry name" value="Ribsml_uS5_D2-typ_fold_subgr"/>
</dbReference>
<dbReference type="NCBIfam" id="NF001099">
    <property type="entry name" value="PRK00132.1"/>
    <property type="match status" value="1"/>
</dbReference>
<dbReference type="PANTHER" id="PTHR21569">
    <property type="entry name" value="RIBOSOMAL PROTEIN S9"/>
    <property type="match status" value="1"/>
</dbReference>
<dbReference type="PANTHER" id="PTHR21569:SF1">
    <property type="entry name" value="SMALL RIBOSOMAL SUBUNIT PROTEIN US9M"/>
    <property type="match status" value="1"/>
</dbReference>
<dbReference type="Pfam" id="PF00380">
    <property type="entry name" value="Ribosomal_S9"/>
    <property type="match status" value="1"/>
</dbReference>
<dbReference type="SUPFAM" id="SSF54211">
    <property type="entry name" value="Ribosomal protein S5 domain 2-like"/>
    <property type="match status" value="1"/>
</dbReference>
<dbReference type="PROSITE" id="PS00360">
    <property type="entry name" value="RIBOSOMAL_S9"/>
    <property type="match status" value="1"/>
</dbReference>
<gene>
    <name evidence="1" type="primary">rpsI</name>
    <name type="ordered locus">VCM66_0529</name>
</gene>
<reference key="1">
    <citation type="journal article" date="2008" name="PLoS ONE">
        <title>A recalibrated molecular clock and independent origins for the cholera pandemic clones.</title>
        <authorList>
            <person name="Feng L."/>
            <person name="Reeves P.R."/>
            <person name="Lan R."/>
            <person name="Ren Y."/>
            <person name="Gao C."/>
            <person name="Zhou Z."/>
            <person name="Ren Y."/>
            <person name="Cheng J."/>
            <person name="Wang W."/>
            <person name="Wang J."/>
            <person name="Qian W."/>
            <person name="Li D."/>
            <person name="Wang L."/>
        </authorList>
    </citation>
    <scope>NUCLEOTIDE SEQUENCE [LARGE SCALE GENOMIC DNA]</scope>
    <source>
        <strain>M66-2</strain>
    </source>
</reference>
<sequence>MAENQYYGTGRRKSSAARVFIKPGSGNIVINKRSLEEYFGRPTSCMVVKQPLELVDMVEKLDLYITVKGGGISGQAGAIRHGITRALMEYDESLRPVLRAAGYVTRDARRVERKKVGLRKARRRPQFSKR</sequence>
<keyword id="KW-0687">Ribonucleoprotein</keyword>
<keyword id="KW-0689">Ribosomal protein</keyword>
<name>RS9_VIBCM</name>
<evidence type="ECO:0000255" key="1">
    <source>
        <dbReference type="HAMAP-Rule" id="MF_00532"/>
    </source>
</evidence>
<evidence type="ECO:0000305" key="2"/>
<protein>
    <recommendedName>
        <fullName evidence="1">Small ribosomal subunit protein uS9</fullName>
    </recommendedName>
    <alternativeName>
        <fullName evidence="2">30S ribosomal protein S9</fullName>
    </alternativeName>
</protein>
<comment type="similarity">
    <text evidence="1">Belongs to the universal ribosomal protein uS9 family.</text>
</comment>
<organism>
    <name type="scientific">Vibrio cholerae serotype O1 (strain M66-2)</name>
    <dbReference type="NCBI Taxonomy" id="579112"/>
    <lineage>
        <taxon>Bacteria</taxon>
        <taxon>Pseudomonadati</taxon>
        <taxon>Pseudomonadota</taxon>
        <taxon>Gammaproteobacteria</taxon>
        <taxon>Vibrionales</taxon>
        <taxon>Vibrionaceae</taxon>
        <taxon>Vibrio</taxon>
    </lineage>
</organism>
<proteinExistence type="inferred from homology"/>
<feature type="chain" id="PRO_1000146479" description="Small ribosomal subunit protein uS9">
    <location>
        <begin position="1"/>
        <end position="130"/>
    </location>
</feature>
<accession>C3LS61</accession>